<comment type="catalytic activity">
    <reaction>
        <text>5-amino-1-(5-phospho-D-ribosyl)imidazole-4-carboxylate + L-aspartate + ATP = (2S)-2-[5-amino-1-(5-phospho-beta-D-ribosyl)imidazole-4-carboxamido]succinate + ADP + phosphate + 2 H(+)</text>
        <dbReference type="Rhea" id="RHEA:22628"/>
        <dbReference type="ChEBI" id="CHEBI:15378"/>
        <dbReference type="ChEBI" id="CHEBI:29991"/>
        <dbReference type="ChEBI" id="CHEBI:30616"/>
        <dbReference type="ChEBI" id="CHEBI:43474"/>
        <dbReference type="ChEBI" id="CHEBI:58443"/>
        <dbReference type="ChEBI" id="CHEBI:77657"/>
        <dbReference type="ChEBI" id="CHEBI:456216"/>
        <dbReference type="EC" id="6.3.2.6"/>
    </reaction>
</comment>
<comment type="pathway">
    <text>Purine metabolism; IMP biosynthesis via de novo pathway; 5-amino-1-(5-phospho-D-ribosyl)imidazole-4-carboxamide from 5-amino-1-(5-phospho-D-ribosyl)imidazole-4-carboxylate: step 1/2.</text>
</comment>
<comment type="similarity">
    <text evidence="1">Belongs to the SAICAR synthetase family.</text>
</comment>
<keyword id="KW-0067">ATP-binding</keyword>
<keyword id="KW-0436">Ligase</keyword>
<keyword id="KW-0547">Nucleotide-binding</keyword>
<keyword id="KW-0658">Purine biosynthesis</keyword>
<dbReference type="EC" id="6.3.2.6"/>
<dbReference type="EMBL" id="AY034035">
    <property type="protein sequence ID" value="AAK55758.1"/>
    <property type="molecule type" value="Genomic_DNA"/>
</dbReference>
<dbReference type="SMR" id="Q96VP6"/>
<dbReference type="PhylomeDB" id="Q96VP6"/>
<dbReference type="UniPathway" id="UPA00074">
    <property type="reaction ID" value="UER00131"/>
</dbReference>
<dbReference type="GO" id="GO:0005737">
    <property type="term" value="C:cytoplasm"/>
    <property type="evidence" value="ECO:0007669"/>
    <property type="project" value="TreeGrafter"/>
</dbReference>
<dbReference type="GO" id="GO:0005524">
    <property type="term" value="F:ATP binding"/>
    <property type="evidence" value="ECO:0007669"/>
    <property type="project" value="UniProtKB-KW"/>
</dbReference>
<dbReference type="GO" id="GO:0004639">
    <property type="term" value="F:phosphoribosylaminoimidazolesuccinocarboxamide synthase activity"/>
    <property type="evidence" value="ECO:0007669"/>
    <property type="project" value="UniProtKB-EC"/>
</dbReference>
<dbReference type="GO" id="GO:0006189">
    <property type="term" value="P:'de novo' IMP biosynthetic process"/>
    <property type="evidence" value="ECO:0007669"/>
    <property type="project" value="UniProtKB-UniPathway"/>
</dbReference>
<dbReference type="CDD" id="cd01414">
    <property type="entry name" value="SAICAR_synt_Sc"/>
    <property type="match status" value="1"/>
</dbReference>
<dbReference type="FunFam" id="3.30.200.20:FF:000392">
    <property type="entry name" value="Phosphoribosylaminoimidazole-succinocarboxamide synthase"/>
    <property type="match status" value="1"/>
</dbReference>
<dbReference type="FunFam" id="3.30.470.20:FF:000015">
    <property type="entry name" value="Phosphoribosylaminoimidazole-succinocarboxamide synthase"/>
    <property type="match status" value="1"/>
</dbReference>
<dbReference type="Gene3D" id="3.30.470.20">
    <property type="entry name" value="ATP-grasp fold, B domain"/>
    <property type="match status" value="1"/>
</dbReference>
<dbReference type="Gene3D" id="3.30.200.20">
    <property type="entry name" value="Phosphorylase Kinase, domain 1"/>
    <property type="match status" value="1"/>
</dbReference>
<dbReference type="HAMAP" id="MF_00137">
    <property type="entry name" value="SAICAR_synth"/>
    <property type="match status" value="1"/>
</dbReference>
<dbReference type="InterPro" id="IPR028923">
    <property type="entry name" value="SAICAR_synt/ADE2_N"/>
</dbReference>
<dbReference type="InterPro" id="IPR001636">
    <property type="entry name" value="SAICAR_synth"/>
</dbReference>
<dbReference type="InterPro" id="IPR018236">
    <property type="entry name" value="SAICAR_synthetase_CS"/>
</dbReference>
<dbReference type="NCBIfam" id="NF010568">
    <property type="entry name" value="PRK13961.1"/>
    <property type="match status" value="1"/>
</dbReference>
<dbReference type="NCBIfam" id="TIGR00081">
    <property type="entry name" value="purC"/>
    <property type="match status" value="1"/>
</dbReference>
<dbReference type="PANTHER" id="PTHR43700">
    <property type="entry name" value="PHOSPHORIBOSYLAMINOIMIDAZOLE-SUCCINOCARBOXAMIDE SYNTHASE"/>
    <property type="match status" value="1"/>
</dbReference>
<dbReference type="PANTHER" id="PTHR43700:SF1">
    <property type="entry name" value="PHOSPHORIBOSYLAMINOIMIDAZOLE-SUCCINOCARBOXAMIDE SYNTHASE"/>
    <property type="match status" value="1"/>
</dbReference>
<dbReference type="Pfam" id="PF01259">
    <property type="entry name" value="SAICAR_synt"/>
    <property type="match status" value="1"/>
</dbReference>
<dbReference type="SUPFAM" id="SSF56104">
    <property type="entry name" value="SAICAR synthase-like"/>
    <property type="match status" value="1"/>
</dbReference>
<dbReference type="PROSITE" id="PS01057">
    <property type="entry name" value="SAICAR_SYNTHETASE_1"/>
    <property type="match status" value="1"/>
</dbReference>
<dbReference type="PROSITE" id="PS01058">
    <property type="entry name" value="SAICAR_SYNTHETASE_2"/>
    <property type="match status" value="1"/>
</dbReference>
<proteinExistence type="inferred from homology"/>
<accession>Q96VP6</accession>
<name>PUR7_PICAN</name>
<organism>
    <name type="scientific">Pichia angusta</name>
    <name type="common">Yeast</name>
    <name type="synonym">Hansenula polymorpha</name>
    <dbReference type="NCBI Taxonomy" id="870730"/>
    <lineage>
        <taxon>Eukaryota</taxon>
        <taxon>Fungi</taxon>
        <taxon>Dikarya</taxon>
        <taxon>Ascomycota</taxon>
        <taxon>Saccharomycotina</taxon>
        <taxon>Pichiomycetes</taxon>
        <taxon>Pichiales</taxon>
        <taxon>Pichiaceae</taxon>
        <taxon>Ogataea</taxon>
    </lineage>
</organism>
<reference key="1">
    <citation type="journal article" date="2002" name="FEMS Yeast Res.">
        <title>Characterization of the Hansenula polymorpha PUR7 gene and its use as selectable marker for targeted chromosomal integration.</title>
        <authorList>
            <person name="Haan G.J."/>
            <person name="van Dijk R."/>
            <person name="Kiel J.A.K.W."/>
            <person name="Veenhuis M."/>
        </authorList>
    </citation>
    <scope>NUCLEOTIDE SEQUENCE [GENOMIC DNA]</scope>
    <source>
        <strain>ATCC 14754 / CBS 1976 / JCM 3620 / NBRC 0799 / NCYC 495 / NRRL Y-1798 / VKM Y-1397</strain>
    </source>
</reference>
<protein>
    <recommendedName>
        <fullName>Phosphoribosylaminoimidazole-succinocarboxamide synthase</fullName>
        <ecNumber>6.3.2.6</ecNumber>
    </recommendedName>
    <alternativeName>
        <fullName>SAICAR synthetase</fullName>
    </alternativeName>
</protein>
<gene>
    <name type="primary">ADE1</name>
    <name type="synonym">PUR7</name>
</gene>
<feature type="chain" id="PRO_0000100925" description="Phosphoribosylaminoimidazole-succinocarboxamide synthase">
    <location>
        <begin position="1"/>
        <end position="303"/>
    </location>
</feature>
<sequence length="303" mass="33891">MTVTQTNLDGILPLVARGKVRDIYQVDDNMLLFVATDRISAYDVIMENGIKDKGKILTQLSVFWFNLLSDVIPNHLVASSDKDIFAKLPEQLSEPKYKAQLAGRSLLVKKHKLVPLEAIVRGYITGSAWKEYKKSSTVHGLPVKSGLQESEAFEKPIFTPSTKAEQGQHDENISPEQAAQLVGEELCAEVAQKAIALYSKARDYALSRGIILADTKFEFGLNENNELVLVDEVLTPDSSRFWDAKKYELGRSQESFDKQFLRDWLTSHQLNGKEGVSMTEEIAAKTAAKYKEAYEALTGKTWA</sequence>
<evidence type="ECO:0000305" key="1"/>